<comment type="catalytic activity">
    <reaction evidence="1">
        <text>tRNA(Arg) + L-arginine + ATP = L-arginyl-tRNA(Arg) + AMP + diphosphate</text>
        <dbReference type="Rhea" id="RHEA:20301"/>
        <dbReference type="Rhea" id="RHEA-COMP:9658"/>
        <dbReference type="Rhea" id="RHEA-COMP:9673"/>
        <dbReference type="ChEBI" id="CHEBI:30616"/>
        <dbReference type="ChEBI" id="CHEBI:32682"/>
        <dbReference type="ChEBI" id="CHEBI:33019"/>
        <dbReference type="ChEBI" id="CHEBI:78442"/>
        <dbReference type="ChEBI" id="CHEBI:78513"/>
        <dbReference type="ChEBI" id="CHEBI:456215"/>
        <dbReference type="EC" id="6.1.1.19"/>
    </reaction>
</comment>
<comment type="subunit">
    <text evidence="1">Monomer.</text>
</comment>
<comment type="subcellular location">
    <subcellularLocation>
        <location evidence="1">Cytoplasm</location>
    </subcellularLocation>
</comment>
<comment type="similarity">
    <text evidence="1">Belongs to the class-I aminoacyl-tRNA synthetase family.</text>
</comment>
<proteinExistence type="inferred from homology"/>
<gene>
    <name evidence="1" type="primary">argS</name>
    <name type="ordered locus">RHECIAT_CH0001904</name>
</gene>
<evidence type="ECO:0000255" key="1">
    <source>
        <dbReference type="HAMAP-Rule" id="MF_00123"/>
    </source>
</evidence>
<protein>
    <recommendedName>
        <fullName evidence="1">Arginine--tRNA ligase</fullName>
        <ecNumber evidence="1">6.1.1.19</ecNumber>
    </recommendedName>
    <alternativeName>
        <fullName evidence="1">Arginyl-tRNA synthetase</fullName>
        <shortName evidence="1">ArgRS</shortName>
    </alternativeName>
</protein>
<feature type="chain" id="PRO_1000095396" description="Arginine--tRNA ligase">
    <location>
        <begin position="1"/>
        <end position="585"/>
    </location>
</feature>
<feature type="short sequence motif" description="'HIGH' region">
    <location>
        <begin position="131"/>
        <end position="141"/>
    </location>
</feature>
<organism>
    <name type="scientific">Rhizobium etli (strain CIAT 652)</name>
    <dbReference type="NCBI Taxonomy" id="491916"/>
    <lineage>
        <taxon>Bacteria</taxon>
        <taxon>Pseudomonadati</taxon>
        <taxon>Pseudomonadota</taxon>
        <taxon>Alphaproteobacteria</taxon>
        <taxon>Hyphomicrobiales</taxon>
        <taxon>Rhizobiaceae</taxon>
        <taxon>Rhizobium/Agrobacterium group</taxon>
        <taxon>Rhizobium</taxon>
    </lineage>
</organism>
<accession>B3PXT5</accession>
<reference key="1">
    <citation type="journal article" date="2010" name="Appl. Environ. Microbiol.">
        <title>Conserved symbiotic plasmid DNA sequences in the multireplicon pangenomic structure of Rhizobium etli.</title>
        <authorList>
            <person name="Gonzalez V."/>
            <person name="Acosta J.L."/>
            <person name="Santamaria R.I."/>
            <person name="Bustos P."/>
            <person name="Fernandez J.L."/>
            <person name="Hernandez Gonzalez I.L."/>
            <person name="Diaz R."/>
            <person name="Flores M."/>
            <person name="Palacios R."/>
            <person name="Mora J."/>
            <person name="Davila G."/>
        </authorList>
    </citation>
    <scope>NUCLEOTIDE SEQUENCE [LARGE SCALE GENOMIC DNA]</scope>
    <source>
        <strain>CIAT 652</strain>
    </source>
</reference>
<sequence length="585" mass="64715">MNLFTDFEARIKTALEQIDLVREKRSELDFGRITVEPPRDASHGDVATNAAMVLAKPLGSNPRALADVIIAKLKEDADVADVSVAGPGFINIRLSVGYWQRLLASMINSGTDYGRSTLGAGRKVNVEYVSANPTGPMHVGHCRGAVVGDALANLLAFAGYGVEKEYYINDAGSQIDVLARSVFLRYREALGERIGEIPSGLYPGDYLVPVGQSLAADYGVRLHNMPEEQWMPIVKDRTISAMMVMIREDLAALNVHHDIFFSERTLHANGAAAIRTAINDLTFKGYVYKGTLPPPKGQLPEDWEDREQTLFRSTEVGDDMDRPLIKSDGSYTYFAADVAYFKNKFDRGFDEMIYVLGADHGGYVKRLEAVARGVSNGKAKLTVLLCQLVKLYRNGEPVKMSKRSGDFVTLRDVVEEVGRDSVRFMMLYRKNSEPLDFDFAKVTEQSKDNPVFYVQYAHARCMSVFRQAREAFPGLEVSAEDLAKAVAGIGDPAELQLVAKLAEFPRVVEAAAQSQEPHRIAFYLYDLASSFHAHWNKGKDQTELRFVNDKNRESSIARLGLVYAVASVLKSGLAITGTAAPDEMR</sequence>
<dbReference type="EC" id="6.1.1.19" evidence="1"/>
<dbReference type="EMBL" id="CP001074">
    <property type="protein sequence ID" value="ACE90871.1"/>
    <property type="molecule type" value="Genomic_DNA"/>
</dbReference>
<dbReference type="SMR" id="B3PXT5"/>
<dbReference type="KEGG" id="rec:RHECIAT_CH0001904"/>
<dbReference type="eggNOG" id="COG0018">
    <property type="taxonomic scope" value="Bacteria"/>
</dbReference>
<dbReference type="HOGENOM" id="CLU_006406_0_1_5"/>
<dbReference type="Proteomes" id="UP000008817">
    <property type="component" value="Chromosome"/>
</dbReference>
<dbReference type="GO" id="GO:0005737">
    <property type="term" value="C:cytoplasm"/>
    <property type="evidence" value="ECO:0007669"/>
    <property type="project" value="UniProtKB-SubCell"/>
</dbReference>
<dbReference type="GO" id="GO:0004814">
    <property type="term" value="F:arginine-tRNA ligase activity"/>
    <property type="evidence" value="ECO:0007669"/>
    <property type="project" value="UniProtKB-UniRule"/>
</dbReference>
<dbReference type="GO" id="GO:0005524">
    <property type="term" value="F:ATP binding"/>
    <property type="evidence" value="ECO:0007669"/>
    <property type="project" value="UniProtKB-UniRule"/>
</dbReference>
<dbReference type="GO" id="GO:0006420">
    <property type="term" value="P:arginyl-tRNA aminoacylation"/>
    <property type="evidence" value="ECO:0007669"/>
    <property type="project" value="UniProtKB-UniRule"/>
</dbReference>
<dbReference type="CDD" id="cd00671">
    <property type="entry name" value="ArgRS_core"/>
    <property type="match status" value="1"/>
</dbReference>
<dbReference type="FunFam" id="1.10.730.10:FF:000008">
    <property type="entry name" value="Arginine--tRNA ligase"/>
    <property type="match status" value="1"/>
</dbReference>
<dbReference type="Gene3D" id="3.30.1360.70">
    <property type="entry name" value="Arginyl tRNA synthetase N-terminal domain"/>
    <property type="match status" value="1"/>
</dbReference>
<dbReference type="Gene3D" id="3.40.50.620">
    <property type="entry name" value="HUPs"/>
    <property type="match status" value="1"/>
</dbReference>
<dbReference type="Gene3D" id="1.10.730.10">
    <property type="entry name" value="Isoleucyl-tRNA Synthetase, Domain 1"/>
    <property type="match status" value="1"/>
</dbReference>
<dbReference type="HAMAP" id="MF_00123">
    <property type="entry name" value="Arg_tRNA_synth"/>
    <property type="match status" value="1"/>
</dbReference>
<dbReference type="InterPro" id="IPR001412">
    <property type="entry name" value="aa-tRNA-synth_I_CS"/>
</dbReference>
<dbReference type="InterPro" id="IPR001278">
    <property type="entry name" value="Arg-tRNA-ligase"/>
</dbReference>
<dbReference type="InterPro" id="IPR005148">
    <property type="entry name" value="Arg-tRNA-synth_N"/>
</dbReference>
<dbReference type="InterPro" id="IPR036695">
    <property type="entry name" value="Arg-tRNA-synth_N_sf"/>
</dbReference>
<dbReference type="InterPro" id="IPR035684">
    <property type="entry name" value="ArgRS_core"/>
</dbReference>
<dbReference type="InterPro" id="IPR008909">
    <property type="entry name" value="DALR_anticod-bd"/>
</dbReference>
<dbReference type="InterPro" id="IPR014729">
    <property type="entry name" value="Rossmann-like_a/b/a_fold"/>
</dbReference>
<dbReference type="InterPro" id="IPR009080">
    <property type="entry name" value="tRNAsynth_Ia_anticodon-bd"/>
</dbReference>
<dbReference type="NCBIfam" id="TIGR00456">
    <property type="entry name" value="argS"/>
    <property type="match status" value="1"/>
</dbReference>
<dbReference type="PANTHER" id="PTHR11956:SF5">
    <property type="entry name" value="ARGININE--TRNA LIGASE, CYTOPLASMIC"/>
    <property type="match status" value="1"/>
</dbReference>
<dbReference type="PANTHER" id="PTHR11956">
    <property type="entry name" value="ARGINYL-TRNA SYNTHETASE"/>
    <property type="match status" value="1"/>
</dbReference>
<dbReference type="Pfam" id="PF03485">
    <property type="entry name" value="Arg_tRNA_synt_N"/>
    <property type="match status" value="1"/>
</dbReference>
<dbReference type="Pfam" id="PF05746">
    <property type="entry name" value="DALR_1"/>
    <property type="match status" value="1"/>
</dbReference>
<dbReference type="Pfam" id="PF00750">
    <property type="entry name" value="tRNA-synt_1d"/>
    <property type="match status" value="2"/>
</dbReference>
<dbReference type="PRINTS" id="PR01038">
    <property type="entry name" value="TRNASYNTHARG"/>
</dbReference>
<dbReference type="SMART" id="SM01016">
    <property type="entry name" value="Arg_tRNA_synt_N"/>
    <property type="match status" value="1"/>
</dbReference>
<dbReference type="SMART" id="SM00836">
    <property type="entry name" value="DALR_1"/>
    <property type="match status" value="1"/>
</dbReference>
<dbReference type="SUPFAM" id="SSF47323">
    <property type="entry name" value="Anticodon-binding domain of a subclass of class I aminoacyl-tRNA synthetases"/>
    <property type="match status" value="1"/>
</dbReference>
<dbReference type="SUPFAM" id="SSF55190">
    <property type="entry name" value="Arginyl-tRNA synthetase (ArgRS), N-terminal 'additional' domain"/>
    <property type="match status" value="1"/>
</dbReference>
<dbReference type="SUPFAM" id="SSF52374">
    <property type="entry name" value="Nucleotidylyl transferase"/>
    <property type="match status" value="1"/>
</dbReference>
<dbReference type="PROSITE" id="PS00178">
    <property type="entry name" value="AA_TRNA_LIGASE_I"/>
    <property type="match status" value="1"/>
</dbReference>
<name>SYR_RHIE6</name>
<keyword id="KW-0030">Aminoacyl-tRNA synthetase</keyword>
<keyword id="KW-0067">ATP-binding</keyword>
<keyword id="KW-0963">Cytoplasm</keyword>
<keyword id="KW-0436">Ligase</keyword>
<keyword id="KW-0547">Nucleotide-binding</keyword>
<keyword id="KW-0648">Protein biosynthesis</keyword>